<protein>
    <recommendedName>
        <fullName evidence="1">Pyrimidine/purine nucleoside phosphorylase</fullName>
        <ecNumber evidence="1">2.4.2.1</ecNumber>
        <ecNumber evidence="1">2.4.2.2</ecNumber>
    </recommendedName>
    <alternativeName>
        <fullName evidence="1">Adenosine phosphorylase</fullName>
    </alternativeName>
    <alternativeName>
        <fullName evidence="1">Cytidine phosphorylase</fullName>
    </alternativeName>
    <alternativeName>
        <fullName evidence="1">Guanosine phosphorylase</fullName>
    </alternativeName>
    <alternativeName>
        <fullName evidence="1">Inosine phosphorylase</fullName>
    </alternativeName>
    <alternativeName>
        <fullName evidence="1">Thymidine phosphorylase</fullName>
    </alternativeName>
    <alternativeName>
        <fullName evidence="1">Uridine phosphorylase</fullName>
    </alternativeName>
    <alternativeName>
        <fullName evidence="1">Xanthosine phosphorylase</fullName>
    </alternativeName>
</protein>
<accession>B5Y110</accession>
<keyword id="KW-0328">Glycosyltransferase</keyword>
<keyword id="KW-0808">Transferase</keyword>
<evidence type="ECO:0000255" key="1">
    <source>
        <dbReference type="HAMAP-Rule" id="MF_01537"/>
    </source>
</evidence>
<feature type="chain" id="PRO_1000198668" description="Pyrimidine/purine nucleoside phosphorylase">
    <location>
        <begin position="1"/>
        <end position="94"/>
    </location>
</feature>
<dbReference type="EC" id="2.4.2.1" evidence="1"/>
<dbReference type="EC" id="2.4.2.2" evidence="1"/>
<dbReference type="EMBL" id="CP000964">
    <property type="protein sequence ID" value="ACI06730.1"/>
    <property type="molecule type" value="Genomic_DNA"/>
</dbReference>
<dbReference type="SMR" id="B5Y110"/>
<dbReference type="KEGG" id="kpe:KPK_4351"/>
<dbReference type="HOGENOM" id="CLU_157874_0_0_6"/>
<dbReference type="BioCyc" id="KPNE507522:GI0B-4332-MONOMER"/>
<dbReference type="Proteomes" id="UP000001734">
    <property type="component" value="Chromosome"/>
</dbReference>
<dbReference type="GO" id="GO:0005829">
    <property type="term" value="C:cytosol"/>
    <property type="evidence" value="ECO:0007669"/>
    <property type="project" value="TreeGrafter"/>
</dbReference>
<dbReference type="GO" id="GO:0047975">
    <property type="term" value="F:guanosine phosphorylase activity"/>
    <property type="evidence" value="ECO:0007669"/>
    <property type="project" value="UniProtKB-EC"/>
</dbReference>
<dbReference type="GO" id="GO:0004731">
    <property type="term" value="F:purine-nucleoside phosphorylase activity"/>
    <property type="evidence" value="ECO:0007669"/>
    <property type="project" value="UniProtKB-UniRule"/>
</dbReference>
<dbReference type="GO" id="GO:0009032">
    <property type="term" value="F:thymidine phosphorylase activity"/>
    <property type="evidence" value="ECO:0007669"/>
    <property type="project" value="UniProtKB-EC"/>
</dbReference>
<dbReference type="GO" id="GO:0004850">
    <property type="term" value="F:uridine phosphorylase activity"/>
    <property type="evidence" value="ECO:0007669"/>
    <property type="project" value="UniProtKB-EC"/>
</dbReference>
<dbReference type="CDD" id="cd20296">
    <property type="entry name" value="cupin_PpnP-like"/>
    <property type="match status" value="1"/>
</dbReference>
<dbReference type="FunFam" id="2.60.120.10:FF:000016">
    <property type="entry name" value="Pyrimidine/purine nucleoside phosphorylase"/>
    <property type="match status" value="1"/>
</dbReference>
<dbReference type="Gene3D" id="2.60.120.10">
    <property type="entry name" value="Jelly Rolls"/>
    <property type="match status" value="1"/>
</dbReference>
<dbReference type="HAMAP" id="MF_01537">
    <property type="entry name" value="Nucleos_phosphorylase_PpnP"/>
    <property type="match status" value="1"/>
</dbReference>
<dbReference type="InterPro" id="IPR009664">
    <property type="entry name" value="Ppnp"/>
</dbReference>
<dbReference type="InterPro" id="IPR014710">
    <property type="entry name" value="RmlC-like_jellyroll"/>
</dbReference>
<dbReference type="InterPro" id="IPR011051">
    <property type="entry name" value="RmlC_Cupin_sf"/>
</dbReference>
<dbReference type="NCBIfam" id="NF007875">
    <property type="entry name" value="PRK10579.1"/>
    <property type="match status" value="1"/>
</dbReference>
<dbReference type="PANTHER" id="PTHR36540">
    <property type="entry name" value="PYRIMIDINE/PURINE NUCLEOSIDE PHOSPHORYLASE"/>
    <property type="match status" value="1"/>
</dbReference>
<dbReference type="PANTHER" id="PTHR36540:SF1">
    <property type="entry name" value="PYRIMIDINE_PURINE NUCLEOSIDE PHOSPHORYLASE"/>
    <property type="match status" value="1"/>
</dbReference>
<dbReference type="Pfam" id="PF06865">
    <property type="entry name" value="Ppnp"/>
    <property type="match status" value="1"/>
</dbReference>
<dbReference type="SUPFAM" id="SSF51182">
    <property type="entry name" value="RmlC-like cupins"/>
    <property type="match status" value="1"/>
</dbReference>
<comment type="function">
    <text evidence="1">Catalyzes the phosphorolysis of diverse nucleosides, yielding D-ribose 1-phosphate and the respective free bases. Can use uridine, adenosine, guanosine, cytidine, thymidine, inosine and xanthosine as substrates. Also catalyzes the reverse reactions.</text>
</comment>
<comment type="catalytic activity">
    <reaction evidence="1">
        <text>a purine D-ribonucleoside + phosphate = a purine nucleobase + alpha-D-ribose 1-phosphate</text>
        <dbReference type="Rhea" id="RHEA:19805"/>
        <dbReference type="ChEBI" id="CHEBI:26386"/>
        <dbReference type="ChEBI" id="CHEBI:43474"/>
        <dbReference type="ChEBI" id="CHEBI:57720"/>
        <dbReference type="ChEBI" id="CHEBI:142355"/>
        <dbReference type="EC" id="2.4.2.1"/>
    </reaction>
</comment>
<comment type="catalytic activity">
    <reaction evidence="1">
        <text>adenosine + phosphate = alpha-D-ribose 1-phosphate + adenine</text>
        <dbReference type="Rhea" id="RHEA:27642"/>
        <dbReference type="ChEBI" id="CHEBI:16335"/>
        <dbReference type="ChEBI" id="CHEBI:16708"/>
        <dbReference type="ChEBI" id="CHEBI:43474"/>
        <dbReference type="ChEBI" id="CHEBI:57720"/>
        <dbReference type="EC" id="2.4.2.1"/>
    </reaction>
</comment>
<comment type="catalytic activity">
    <reaction evidence="1">
        <text>cytidine + phosphate = cytosine + alpha-D-ribose 1-phosphate</text>
        <dbReference type="Rhea" id="RHEA:52540"/>
        <dbReference type="ChEBI" id="CHEBI:16040"/>
        <dbReference type="ChEBI" id="CHEBI:17562"/>
        <dbReference type="ChEBI" id="CHEBI:43474"/>
        <dbReference type="ChEBI" id="CHEBI:57720"/>
        <dbReference type="EC" id="2.4.2.2"/>
    </reaction>
</comment>
<comment type="catalytic activity">
    <reaction evidence="1">
        <text>guanosine + phosphate = alpha-D-ribose 1-phosphate + guanine</text>
        <dbReference type="Rhea" id="RHEA:13233"/>
        <dbReference type="ChEBI" id="CHEBI:16235"/>
        <dbReference type="ChEBI" id="CHEBI:16750"/>
        <dbReference type="ChEBI" id="CHEBI:43474"/>
        <dbReference type="ChEBI" id="CHEBI:57720"/>
        <dbReference type="EC" id="2.4.2.1"/>
    </reaction>
</comment>
<comment type="catalytic activity">
    <reaction evidence="1">
        <text>inosine + phosphate = alpha-D-ribose 1-phosphate + hypoxanthine</text>
        <dbReference type="Rhea" id="RHEA:27646"/>
        <dbReference type="ChEBI" id="CHEBI:17368"/>
        <dbReference type="ChEBI" id="CHEBI:17596"/>
        <dbReference type="ChEBI" id="CHEBI:43474"/>
        <dbReference type="ChEBI" id="CHEBI:57720"/>
        <dbReference type="EC" id="2.4.2.1"/>
    </reaction>
</comment>
<comment type="catalytic activity">
    <reaction evidence="1">
        <text>thymidine + phosphate = 2-deoxy-alpha-D-ribose 1-phosphate + thymine</text>
        <dbReference type="Rhea" id="RHEA:16037"/>
        <dbReference type="ChEBI" id="CHEBI:17748"/>
        <dbReference type="ChEBI" id="CHEBI:17821"/>
        <dbReference type="ChEBI" id="CHEBI:43474"/>
        <dbReference type="ChEBI" id="CHEBI:57259"/>
        <dbReference type="EC" id="2.4.2.2"/>
    </reaction>
</comment>
<comment type="catalytic activity">
    <reaction evidence="1">
        <text>uridine + phosphate = alpha-D-ribose 1-phosphate + uracil</text>
        <dbReference type="Rhea" id="RHEA:24388"/>
        <dbReference type="ChEBI" id="CHEBI:16704"/>
        <dbReference type="ChEBI" id="CHEBI:17568"/>
        <dbReference type="ChEBI" id="CHEBI:43474"/>
        <dbReference type="ChEBI" id="CHEBI:57720"/>
        <dbReference type="EC" id="2.4.2.2"/>
    </reaction>
</comment>
<comment type="catalytic activity">
    <reaction evidence="1">
        <text>xanthosine + phosphate = alpha-D-ribose 1-phosphate + xanthine</text>
        <dbReference type="Rhea" id="RHEA:27638"/>
        <dbReference type="ChEBI" id="CHEBI:17712"/>
        <dbReference type="ChEBI" id="CHEBI:18107"/>
        <dbReference type="ChEBI" id="CHEBI:43474"/>
        <dbReference type="ChEBI" id="CHEBI:57720"/>
        <dbReference type="EC" id="2.4.2.1"/>
    </reaction>
</comment>
<comment type="similarity">
    <text evidence="1">Belongs to the nucleoside phosphorylase PpnP family.</text>
</comment>
<organism>
    <name type="scientific">Klebsiella pneumoniae (strain 342)</name>
    <dbReference type="NCBI Taxonomy" id="507522"/>
    <lineage>
        <taxon>Bacteria</taxon>
        <taxon>Pseudomonadati</taxon>
        <taxon>Pseudomonadota</taxon>
        <taxon>Gammaproteobacteria</taxon>
        <taxon>Enterobacterales</taxon>
        <taxon>Enterobacteriaceae</taxon>
        <taxon>Klebsiella/Raoultella group</taxon>
        <taxon>Klebsiella</taxon>
        <taxon>Klebsiella pneumoniae complex</taxon>
    </lineage>
</organism>
<name>PPNP_KLEP3</name>
<gene>
    <name evidence="1" type="primary">ppnP</name>
    <name type="ordered locus">KPK_4351</name>
</gene>
<reference key="1">
    <citation type="journal article" date="2008" name="PLoS Genet.">
        <title>Complete genome sequence of the N2-fixing broad host range endophyte Klebsiella pneumoniae 342 and virulence predictions verified in mice.</title>
        <authorList>
            <person name="Fouts D.E."/>
            <person name="Tyler H.L."/>
            <person name="DeBoy R.T."/>
            <person name="Daugherty S."/>
            <person name="Ren Q."/>
            <person name="Badger J.H."/>
            <person name="Durkin A.S."/>
            <person name="Huot H."/>
            <person name="Shrivastava S."/>
            <person name="Kothari S."/>
            <person name="Dodson R.J."/>
            <person name="Mohamoud Y."/>
            <person name="Khouri H."/>
            <person name="Roesch L.F.W."/>
            <person name="Krogfelt K.A."/>
            <person name="Struve C."/>
            <person name="Triplett E.W."/>
            <person name="Methe B.A."/>
        </authorList>
    </citation>
    <scope>NUCLEOTIDE SEQUENCE [LARGE SCALE GENOMIC DNA]</scope>
    <source>
        <strain>342</strain>
    </source>
</reference>
<proteinExistence type="inferred from homology"/>
<sequence>MLQSNEYFDGKVKSIGFTSSSTGRASVGVMAEGEYTFGTAQPEEMTVVSGALNVLLPGETEWKVYAAGEVFNVPGNSEFHLQVAEPTSYLCRYL</sequence>